<organism>
    <name type="scientific">Neisseria meningitidis serogroup B / serotype 15 (strain H44/76)</name>
    <dbReference type="NCBI Taxonomy" id="909420"/>
    <lineage>
        <taxon>Bacteria</taxon>
        <taxon>Pseudomonadati</taxon>
        <taxon>Pseudomonadota</taxon>
        <taxon>Betaproteobacteria</taxon>
        <taxon>Neisseriales</taxon>
        <taxon>Neisseriaceae</taxon>
        <taxon>Neisseria</taxon>
    </lineage>
</organism>
<evidence type="ECO:0000255" key="1">
    <source>
        <dbReference type="HAMAP-Rule" id="MF_00235"/>
    </source>
</evidence>
<keyword id="KW-0067">ATP-binding</keyword>
<keyword id="KW-0963">Cytoplasm</keyword>
<keyword id="KW-0418">Kinase</keyword>
<keyword id="KW-0545">Nucleotide biosynthesis</keyword>
<keyword id="KW-0547">Nucleotide-binding</keyword>
<keyword id="KW-0808">Transferase</keyword>
<proteinExistence type="inferred from homology"/>
<reference key="1">
    <citation type="journal article" date="1995" name="Proc. Natl. Acad. Sci. U.S.A.">
        <title>Electrophoretic variation in adenylate kinase of Neisseria meningitidis is due to inter- and intraspecies recombination.</title>
        <authorList>
            <person name="Feil E."/>
            <person name="Carpenter G."/>
            <person name="Spratt B.G."/>
        </authorList>
    </citation>
    <scope>NUCLEOTIDE SEQUENCE [GENOMIC DNA]</scope>
    <source>
        <strain>H44/76</strain>
    </source>
</reference>
<reference key="2">
    <citation type="journal article" date="2011" name="J. Bacteriol.">
        <title>Genome sequence of Neisseria meningitidis serogroup B strain H44/76.</title>
        <authorList>
            <person name="Piet J.R."/>
            <person name="Huis In 't Veld R.A."/>
            <person name="van Schaik B.D."/>
            <person name="van Kampen A.H."/>
            <person name="Baas F."/>
            <person name="van de Beek D."/>
            <person name="Pannekoek Y."/>
            <person name="van der Ende A."/>
        </authorList>
    </citation>
    <scope>NUCLEOTIDE SEQUENCE [LARGE SCALE GENOMIC DNA]</scope>
    <source>
        <strain>H44/76</strain>
    </source>
</reference>
<reference key="3">
    <citation type="journal article" date="2011" name="Proc. Natl. Acad. Sci. U.S.A.">
        <title>Neisseria meningitidis is structured in clades associated with restriction modification systems that modulate homologous recombination.</title>
        <authorList>
            <person name="Budroni S."/>
            <person name="Siena E."/>
            <person name="Hotopp J.C."/>
            <person name="Seib K.L."/>
            <person name="Serruto D."/>
            <person name="Nofroni C."/>
            <person name="Comanducci M."/>
            <person name="Riley D.R."/>
            <person name="Daugherty S.C."/>
            <person name="Angiuoli S.V."/>
            <person name="Covacci A."/>
            <person name="Pizza M."/>
            <person name="Rappuoli R."/>
            <person name="Moxon E.R."/>
            <person name="Tettelin H."/>
            <person name="Medini D."/>
        </authorList>
    </citation>
    <scope>NUCLEOTIDE SEQUENCE [LARGE SCALE GENOMIC DNA]</scope>
    <source>
        <strain>H44/76</strain>
    </source>
</reference>
<gene>
    <name evidence="1" type="primary">adk</name>
    <name type="ordered locus">NMBH4476_1363</name>
    <name type="ORF">NMH_1646</name>
</gene>
<protein>
    <recommendedName>
        <fullName evidence="1">Adenylate kinase</fullName>
        <shortName evidence="1">AK</shortName>
        <ecNumber evidence="1">2.7.4.3</ecNumber>
    </recommendedName>
    <alternativeName>
        <fullName evidence="1">ATP-AMP transphosphorylase</fullName>
    </alternativeName>
    <alternativeName>
        <fullName evidence="1">ATP:AMP phosphotransferase</fullName>
    </alternativeName>
    <alternativeName>
        <fullName evidence="1">Adenylate monophosphate kinase</fullName>
    </alternativeName>
</protein>
<feature type="chain" id="PRO_0000411246" description="Adenylate kinase">
    <location>
        <begin position="1"/>
        <end position="215"/>
    </location>
</feature>
<feature type="region of interest" description="NMP" evidence="1">
    <location>
        <begin position="30"/>
        <end position="59"/>
    </location>
</feature>
<feature type="region of interest" description="LID" evidence="1">
    <location>
        <begin position="122"/>
        <end position="159"/>
    </location>
</feature>
<feature type="binding site" evidence="1">
    <location>
        <begin position="10"/>
        <end position="15"/>
    </location>
    <ligand>
        <name>ATP</name>
        <dbReference type="ChEBI" id="CHEBI:30616"/>
    </ligand>
</feature>
<feature type="binding site" evidence="1">
    <location>
        <position position="31"/>
    </location>
    <ligand>
        <name>AMP</name>
        <dbReference type="ChEBI" id="CHEBI:456215"/>
    </ligand>
</feature>
<feature type="binding site" evidence="1">
    <location>
        <position position="36"/>
    </location>
    <ligand>
        <name>AMP</name>
        <dbReference type="ChEBI" id="CHEBI:456215"/>
    </ligand>
</feature>
<feature type="binding site" evidence="1">
    <location>
        <begin position="57"/>
        <end position="59"/>
    </location>
    <ligand>
        <name>AMP</name>
        <dbReference type="ChEBI" id="CHEBI:456215"/>
    </ligand>
</feature>
<feature type="binding site" evidence="1">
    <location>
        <begin position="85"/>
        <end position="88"/>
    </location>
    <ligand>
        <name>AMP</name>
        <dbReference type="ChEBI" id="CHEBI:456215"/>
    </ligand>
</feature>
<feature type="binding site" evidence="1">
    <location>
        <position position="92"/>
    </location>
    <ligand>
        <name>AMP</name>
        <dbReference type="ChEBI" id="CHEBI:456215"/>
    </ligand>
</feature>
<feature type="binding site" evidence="1">
    <location>
        <position position="123"/>
    </location>
    <ligand>
        <name>ATP</name>
        <dbReference type="ChEBI" id="CHEBI:30616"/>
    </ligand>
</feature>
<feature type="binding site" evidence="1">
    <location>
        <begin position="132"/>
        <end position="133"/>
    </location>
    <ligand>
        <name>ATP</name>
        <dbReference type="ChEBI" id="CHEBI:30616"/>
    </ligand>
</feature>
<feature type="binding site" evidence="1">
    <location>
        <position position="156"/>
    </location>
    <ligand>
        <name>AMP</name>
        <dbReference type="ChEBI" id="CHEBI:456215"/>
    </ligand>
</feature>
<feature type="binding site" evidence="1">
    <location>
        <position position="167"/>
    </location>
    <ligand>
        <name>AMP</name>
        <dbReference type="ChEBI" id="CHEBI:456215"/>
    </ligand>
</feature>
<feature type="binding site" evidence="1">
    <location>
        <position position="200"/>
    </location>
    <ligand>
        <name>ATP</name>
        <dbReference type="ChEBI" id="CHEBI:30616"/>
    </ligand>
</feature>
<dbReference type="EC" id="2.7.4.3" evidence="1"/>
<dbReference type="EMBL" id="L47135">
    <property type="protein sequence ID" value="AAC41500.1"/>
    <property type="molecule type" value="Genomic_DNA"/>
</dbReference>
<dbReference type="EMBL" id="AEQZ01000032">
    <property type="protein sequence ID" value="EFV63463.1"/>
    <property type="molecule type" value="Genomic_DNA"/>
</dbReference>
<dbReference type="EMBL" id="CP002420">
    <property type="protein sequence ID" value="ADY95949.1"/>
    <property type="molecule type" value="Genomic_DNA"/>
</dbReference>
<dbReference type="RefSeq" id="WP_002222696.1">
    <property type="nucleotide sequence ID" value="NZ_AEQZ01000032.1"/>
</dbReference>
<dbReference type="SMR" id="E6MY99"/>
<dbReference type="KEGG" id="nmh:NMBH4476_1363"/>
<dbReference type="PATRIC" id="fig|909420.3.peg.1853"/>
<dbReference type="HOGENOM" id="CLU_032354_1_2_4"/>
<dbReference type="UniPathway" id="UPA00588">
    <property type="reaction ID" value="UER00649"/>
</dbReference>
<dbReference type="Proteomes" id="UP000032707">
    <property type="component" value="Unassembled WGS sequence"/>
</dbReference>
<dbReference type="GO" id="GO:0005737">
    <property type="term" value="C:cytoplasm"/>
    <property type="evidence" value="ECO:0007669"/>
    <property type="project" value="UniProtKB-SubCell"/>
</dbReference>
<dbReference type="GO" id="GO:0004017">
    <property type="term" value="F:adenylate kinase activity"/>
    <property type="evidence" value="ECO:0007669"/>
    <property type="project" value="UniProtKB-UniRule"/>
</dbReference>
<dbReference type="GO" id="GO:0005524">
    <property type="term" value="F:ATP binding"/>
    <property type="evidence" value="ECO:0007669"/>
    <property type="project" value="UniProtKB-UniRule"/>
</dbReference>
<dbReference type="GO" id="GO:0044209">
    <property type="term" value="P:AMP salvage"/>
    <property type="evidence" value="ECO:0007669"/>
    <property type="project" value="UniProtKB-UniRule"/>
</dbReference>
<dbReference type="CDD" id="cd01428">
    <property type="entry name" value="ADK"/>
    <property type="match status" value="1"/>
</dbReference>
<dbReference type="FunFam" id="3.40.50.300:FF:000106">
    <property type="entry name" value="Adenylate kinase mitochondrial"/>
    <property type="match status" value="1"/>
</dbReference>
<dbReference type="Gene3D" id="3.40.50.300">
    <property type="entry name" value="P-loop containing nucleotide triphosphate hydrolases"/>
    <property type="match status" value="1"/>
</dbReference>
<dbReference type="HAMAP" id="MF_00235">
    <property type="entry name" value="Adenylate_kinase_Adk"/>
    <property type="match status" value="1"/>
</dbReference>
<dbReference type="InterPro" id="IPR006259">
    <property type="entry name" value="Adenyl_kin_sub"/>
</dbReference>
<dbReference type="InterPro" id="IPR000850">
    <property type="entry name" value="Adenylat/UMP-CMP_kin"/>
</dbReference>
<dbReference type="InterPro" id="IPR033690">
    <property type="entry name" value="Adenylat_kinase_CS"/>
</dbReference>
<dbReference type="InterPro" id="IPR007862">
    <property type="entry name" value="Adenylate_kinase_lid-dom"/>
</dbReference>
<dbReference type="InterPro" id="IPR027417">
    <property type="entry name" value="P-loop_NTPase"/>
</dbReference>
<dbReference type="NCBIfam" id="TIGR01351">
    <property type="entry name" value="adk"/>
    <property type="match status" value="1"/>
</dbReference>
<dbReference type="NCBIfam" id="NF001379">
    <property type="entry name" value="PRK00279.1-1"/>
    <property type="match status" value="1"/>
</dbReference>
<dbReference type="NCBIfam" id="NF001380">
    <property type="entry name" value="PRK00279.1-2"/>
    <property type="match status" value="1"/>
</dbReference>
<dbReference type="NCBIfam" id="NF001381">
    <property type="entry name" value="PRK00279.1-3"/>
    <property type="match status" value="1"/>
</dbReference>
<dbReference type="PANTHER" id="PTHR23359">
    <property type="entry name" value="NUCLEOTIDE KINASE"/>
    <property type="match status" value="1"/>
</dbReference>
<dbReference type="Pfam" id="PF00406">
    <property type="entry name" value="ADK"/>
    <property type="match status" value="1"/>
</dbReference>
<dbReference type="Pfam" id="PF05191">
    <property type="entry name" value="ADK_lid"/>
    <property type="match status" value="1"/>
</dbReference>
<dbReference type="PRINTS" id="PR00094">
    <property type="entry name" value="ADENYLTKNASE"/>
</dbReference>
<dbReference type="SUPFAM" id="SSF52540">
    <property type="entry name" value="P-loop containing nucleoside triphosphate hydrolases"/>
    <property type="match status" value="1"/>
</dbReference>
<dbReference type="PROSITE" id="PS00113">
    <property type="entry name" value="ADENYLATE_KINASE"/>
    <property type="match status" value="1"/>
</dbReference>
<name>KAD_NEIMH</name>
<comment type="function">
    <text evidence="1">Catalyzes the reversible transfer of the terminal phosphate group between ATP and AMP. Plays an important role in cellular energy homeostasis and in adenine nucleotide metabolism.</text>
</comment>
<comment type="catalytic activity">
    <reaction evidence="1">
        <text>AMP + ATP = 2 ADP</text>
        <dbReference type="Rhea" id="RHEA:12973"/>
        <dbReference type="ChEBI" id="CHEBI:30616"/>
        <dbReference type="ChEBI" id="CHEBI:456215"/>
        <dbReference type="ChEBI" id="CHEBI:456216"/>
        <dbReference type="EC" id="2.7.4.3"/>
    </reaction>
</comment>
<comment type="pathway">
    <text evidence="1">Purine metabolism; AMP biosynthesis via salvage pathway; AMP from ADP: step 1/1.</text>
</comment>
<comment type="subunit">
    <text evidence="1">Monomer.</text>
</comment>
<comment type="subcellular location">
    <subcellularLocation>
        <location evidence="1">Cytoplasm</location>
    </subcellularLocation>
</comment>
<comment type="domain">
    <text evidence="1">Consists of three domains, a large central CORE domain and two small peripheral domains, NMPbind and LID, which undergo movements during catalysis. The LID domain closes over the site of phosphoryl transfer upon ATP binding. Assembling and dissambling the active center during each catalytic cycle provides an effective means to prevent ATP hydrolysis.</text>
</comment>
<comment type="similarity">
    <text evidence="1">Belongs to the adenylate kinase family.</text>
</comment>
<sequence length="215" mass="23190">MKALLLGAPGAGKGTQAQFITAAFGIPQISTGDMLRAAIKAGTPLGLEAKKIIDEGGLVRDDIIIGMVKERIAQDDCKNGFLFDGFPRTLAQAEAMVEAGVDLDAVVEIDVPDSVIVDRMSGRRVHLASGRTYHVTYNPPKVEGKDDVTGEDLIQRDDDKEETVKKRLAVYHEQTEVLVDFYSKLEGEHAPKYIKVDGTQAVEAVKAEVLGALGK</sequence>
<accession>E6MY99</accession>
<accession>P49980</accession>
<accession>P69344</accession>